<dbReference type="EC" id="2.8.1.6" evidence="1"/>
<dbReference type="EMBL" id="CP000384">
    <property type="protein sequence ID" value="ABG09180.1"/>
    <property type="molecule type" value="Genomic_DNA"/>
</dbReference>
<dbReference type="SMR" id="Q1B7F4"/>
<dbReference type="KEGG" id="mmc:Mmcs_3073"/>
<dbReference type="HOGENOM" id="CLU_033172_2_1_11"/>
<dbReference type="BioCyc" id="MSP164756:G1G6O-3137-MONOMER"/>
<dbReference type="UniPathway" id="UPA00078">
    <property type="reaction ID" value="UER00162"/>
</dbReference>
<dbReference type="GO" id="GO:0051537">
    <property type="term" value="F:2 iron, 2 sulfur cluster binding"/>
    <property type="evidence" value="ECO:0007669"/>
    <property type="project" value="UniProtKB-KW"/>
</dbReference>
<dbReference type="GO" id="GO:0051539">
    <property type="term" value="F:4 iron, 4 sulfur cluster binding"/>
    <property type="evidence" value="ECO:0007669"/>
    <property type="project" value="UniProtKB-KW"/>
</dbReference>
<dbReference type="GO" id="GO:0004076">
    <property type="term" value="F:biotin synthase activity"/>
    <property type="evidence" value="ECO:0007669"/>
    <property type="project" value="UniProtKB-UniRule"/>
</dbReference>
<dbReference type="GO" id="GO:0005506">
    <property type="term" value="F:iron ion binding"/>
    <property type="evidence" value="ECO:0007669"/>
    <property type="project" value="UniProtKB-UniRule"/>
</dbReference>
<dbReference type="GO" id="GO:0009102">
    <property type="term" value="P:biotin biosynthetic process"/>
    <property type="evidence" value="ECO:0007669"/>
    <property type="project" value="UniProtKB-UniRule"/>
</dbReference>
<dbReference type="CDD" id="cd01335">
    <property type="entry name" value="Radical_SAM"/>
    <property type="match status" value="1"/>
</dbReference>
<dbReference type="FunFam" id="3.20.20.70:FF:000026">
    <property type="entry name" value="Biotin synthase"/>
    <property type="match status" value="1"/>
</dbReference>
<dbReference type="Gene3D" id="3.20.20.70">
    <property type="entry name" value="Aldolase class I"/>
    <property type="match status" value="1"/>
</dbReference>
<dbReference type="HAMAP" id="MF_01694">
    <property type="entry name" value="BioB"/>
    <property type="match status" value="1"/>
</dbReference>
<dbReference type="InterPro" id="IPR013785">
    <property type="entry name" value="Aldolase_TIM"/>
</dbReference>
<dbReference type="InterPro" id="IPR010722">
    <property type="entry name" value="BATS_dom"/>
</dbReference>
<dbReference type="InterPro" id="IPR002684">
    <property type="entry name" value="Biotin_synth/BioAB"/>
</dbReference>
<dbReference type="InterPro" id="IPR024177">
    <property type="entry name" value="Biotin_synthase"/>
</dbReference>
<dbReference type="InterPro" id="IPR006638">
    <property type="entry name" value="Elp3/MiaA/NifB-like_rSAM"/>
</dbReference>
<dbReference type="InterPro" id="IPR007197">
    <property type="entry name" value="rSAM"/>
</dbReference>
<dbReference type="NCBIfam" id="TIGR00433">
    <property type="entry name" value="bioB"/>
    <property type="match status" value="1"/>
</dbReference>
<dbReference type="PANTHER" id="PTHR22976">
    <property type="entry name" value="BIOTIN SYNTHASE"/>
    <property type="match status" value="1"/>
</dbReference>
<dbReference type="PANTHER" id="PTHR22976:SF2">
    <property type="entry name" value="BIOTIN SYNTHASE, MITOCHONDRIAL"/>
    <property type="match status" value="1"/>
</dbReference>
<dbReference type="Pfam" id="PF06968">
    <property type="entry name" value="BATS"/>
    <property type="match status" value="1"/>
</dbReference>
<dbReference type="Pfam" id="PF04055">
    <property type="entry name" value="Radical_SAM"/>
    <property type="match status" value="1"/>
</dbReference>
<dbReference type="PIRSF" id="PIRSF001619">
    <property type="entry name" value="Biotin_synth"/>
    <property type="match status" value="1"/>
</dbReference>
<dbReference type="SFLD" id="SFLDG01082">
    <property type="entry name" value="B12-binding_domain_containing"/>
    <property type="match status" value="1"/>
</dbReference>
<dbReference type="SFLD" id="SFLDG01278">
    <property type="entry name" value="biotin_synthase_like"/>
    <property type="match status" value="1"/>
</dbReference>
<dbReference type="SFLD" id="SFLDS00029">
    <property type="entry name" value="Radical_SAM"/>
    <property type="match status" value="1"/>
</dbReference>
<dbReference type="SMART" id="SM00876">
    <property type="entry name" value="BATS"/>
    <property type="match status" value="1"/>
</dbReference>
<dbReference type="SMART" id="SM00729">
    <property type="entry name" value="Elp3"/>
    <property type="match status" value="1"/>
</dbReference>
<dbReference type="SUPFAM" id="SSF102114">
    <property type="entry name" value="Radical SAM enzymes"/>
    <property type="match status" value="1"/>
</dbReference>
<dbReference type="PROSITE" id="PS51918">
    <property type="entry name" value="RADICAL_SAM"/>
    <property type="match status" value="1"/>
</dbReference>
<keyword id="KW-0001">2Fe-2S</keyword>
<keyword id="KW-0004">4Fe-4S</keyword>
<keyword id="KW-0093">Biotin biosynthesis</keyword>
<keyword id="KW-0408">Iron</keyword>
<keyword id="KW-0411">Iron-sulfur</keyword>
<keyword id="KW-0479">Metal-binding</keyword>
<keyword id="KW-0949">S-adenosyl-L-methionine</keyword>
<keyword id="KW-0808">Transferase</keyword>
<reference key="1">
    <citation type="submission" date="2006-06" db="EMBL/GenBank/DDBJ databases">
        <title>Complete sequence of chromosome of Mycobacterium sp. MCS.</title>
        <authorList>
            <consortium name="US DOE Joint Genome Institute"/>
            <person name="Copeland A."/>
            <person name="Lucas S."/>
            <person name="Lapidus A."/>
            <person name="Barry K."/>
            <person name="Detter J.C."/>
            <person name="Glavina del Rio T."/>
            <person name="Hammon N."/>
            <person name="Israni S."/>
            <person name="Dalin E."/>
            <person name="Tice H."/>
            <person name="Pitluck S."/>
            <person name="Martinez M."/>
            <person name="Schmutz J."/>
            <person name="Larimer F."/>
            <person name="Land M."/>
            <person name="Hauser L."/>
            <person name="Kyrpides N."/>
            <person name="Kim E."/>
            <person name="Miller C.D."/>
            <person name="Hughes J.E."/>
            <person name="Anderson A.J."/>
            <person name="Sims R.C."/>
            <person name="Richardson P."/>
        </authorList>
    </citation>
    <scope>NUCLEOTIDE SEQUENCE [LARGE SCALE GENOMIC DNA]</scope>
    <source>
        <strain>MCS</strain>
    </source>
</reference>
<feature type="chain" id="PRO_0000381485" description="Biotin synthase">
    <location>
        <begin position="1"/>
        <end position="331"/>
    </location>
</feature>
<feature type="domain" description="Radical SAM core" evidence="2">
    <location>
        <begin position="52"/>
        <end position="277"/>
    </location>
</feature>
<feature type="binding site" evidence="1">
    <location>
        <position position="67"/>
    </location>
    <ligand>
        <name>[4Fe-4S] cluster</name>
        <dbReference type="ChEBI" id="CHEBI:49883"/>
        <note>4Fe-4S-S-AdoMet</note>
    </ligand>
</feature>
<feature type="binding site" evidence="1">
    <location>
        <position position="71"/>
    </location>
    <ligand>
        <name>[4Fe-4S] cluster</name>
        <dbReference type="ChEBI" id="CHEBI:49883"/>
        <note>4Fe-4S-S-AdoMet</note>
    </ligand>
</feature>
<feature type="binding site" evidence="1">
    <location>
        <position position="74"/>
    </location>
    <ligand>
        <name>[4Fe-4S] cluster</name>
        <dbReference type="ChEBI" id="CHEBI:49883"/>
        <note>4Fe-4S-S-AdoMet</note>
    </ligand>
</feature>
<feature type="binding site" evidence="1">
    <location>
        <position position="110"/>
    </location>
    <ligand>
        <name>[2Fe-2S] cluster</name>
        <dbReference type="ChEBI" id="CHEBI:190135"/>
    </ligand>
</feature>
<feature type="binding site" evidence="1">
    <location>
        <position position="143"/>
    </location>
    <ligand>
        <name>[2Fe-2S] cluster</name>
        <dbReference type="ChEBI" id="CHEBI:190135"/>
    </ligand>
</feature>
<feature type="binding site" evidence="1">
    <location>
        <position position="202"/>
    </location>
    <ligand>
        <name>[2Fe-2S] cluster</name>
        <dbReference type="ChEBI" id="CHEBI:190135"/>
    </ligand>
</feature>
<feature type="binding site" evidence="1">
    <location>
        <position position="272"/>
    </location>
    <ligand>
        <name>[2Fe-2S] cluster</name>
        <dbReference type="ChEBI" id="CHEBI:190135"/>
    </ligand>
</feature>
<comment type="function">
    <text evidence="1">Catalyzes the conversion of dethiobiotin (DTB) to biotin by the insertion of a sulfur atom into dethiobiotin via a radical-based mechanism.</text>
</comment>
<comment type="catalytic activity">
    <reaction evidence="1">
        <text>(4R,5S)-dethiobiotin + (sulfur carrier)-SH + 2 reduced [2Fe-2S]-[ferredoxin] + 2 S-adenosyl-L-methionine = (sulfur carrier)-H + biotin + 2 5'-deoxyadenosine + 2 L-methionine + 2 oxidized [2Fe-2S]-[ferredoxin]</text>
        <dbReference type="Rhea" id="RHEA:22060"/>
        <dbReference type="Rhea" id="RHEA-COMP:10000"/>
        <dbReference type="Rhea" id="RHEA-COMP:10001"/>
        <dbReference type="Rhea" id="RHEA-COMP:14737"/>
        <dbReference type="Rhea" id="RHEA-COMP:14739"/>
        <dbReference type="ChEBI" id="CHEBI:17319"/>
        <dbReference type="ChEBI" id="CHEBI:29917"/>
        <dbReference type="ChEBI" id="CHEBI:33737"/>
        <dbReference type="ChEBI" id="CHEBI:33738"/>
        <dbReference type="ChEBI" id="CHEBI:57586"/>
        <dbReference type="ChEBI" id="CHEBI:57844"/>
        <dbReference type="ChEBI" id="CHEBI:59789"/>
        <dbReference type="ChEBI" id="CHEBI:64428"/>
        <dbReference type="ChEBI" id="CHEBI:149473"/>
        <dbReference type="EC" id="2.8.1.6"/>
    </reaction>
</comment>
<comment type="cofactor">
    <cofactor evidence="1">
        <name>[4Fe-4S] cluster</name>
        <dbReference type="ChEBI" id="CHEBI:49883"/>
    </cofactor>
    <text evidence="1">Binds 1 [4Fe-4S] cluster. The cluster is coordinated with 3 cysteines and an exchangeable S-adenosyl-L-methionine.</text>
</comment>
<comment type="cofactor">
    <cofactor evidence="1">
        <name>[2Fe-2S] cluster</name>
        <dbReference type="ChEBI" id="CHEBI:190135"/>
    </cofactor>
    <text evidence="1">Binds 1 [2Fe-2S] cluster. The cluster is coordinated with 3 cysteines and 1 arginine.</text>
</comment>
<comment type="pathway">
    <text evidence="1">Cofactor biosynthesis; biotin biosynthesis; biotin from 7,8-diaminononanoate: step 2/2.</text>
</comment>
<comment type="subunit">
    <text evidence="1">Homodimer.</text>
</comment>
<comment type="similarity">
    <text evidence="1">Belongs to the radical SAM superfamily. Biotin synthase family.</text>
</comment>
<organism>
    <name type="scientific">Mycobacterium sp. (strain MCS)</name>
    <dbReference type="NCBI Taxonomy" id="164756"/>
    <lineage>
        <taxon>Bacteria</taxon>
        <taxon>Bacillati</taxon>
        <taxon>Actinomycetota</taxon>
        <taxon>Actinomycetes</taxon>
        <taxon>Mycobacteriales</taxon>
        <taxon>Mycobacteriaceae</taxon>
        <taxon>Mycobacterium</taxon>
    </lineage>
</organism>
<sequence>MSDILAVAREQVLERGVGLNQDQTLQVLQLPDDRLDDLLALAHEVRMAWCGPDVEVEGIISLKTGGCPEDCHFCSQSGLFASPVRSAWLDVPSLVEAAKQTAKTGATEFCIVAAVRGPDERLLAQVAAGIEAIRNEVDIQIACSLGMLTAEQVERLSEMGVHRYNHNLETARSFFTNVVTTHTWEERWDTLRMVREAGMEVCCGGILGMGETLEQRAEFAANLAELDPHEVPLNFLNPRPGTPFGDLEVLPAAEALKAVAAFRLALPRTMLRFAGGREITLGDLGAKKGILGGINAVIVGNYLTTLGRPAEADLELLDDLQMPIKALNASL</sequence>
<accession>Q1B7F4</accession>
<protein>
    <recommendedName>
        <fullName evidence="1">Biotin synthase</fullName>
        <ecNumber evidence="1">2.8.1.6</ecNumber>
    </recommendedName>
</protein>
<gene>
    <name evidence="1" type="primary">bioB</name>
    <name type="ordered locus">Mmcs_3073</name>
</gene>
<evidence type="ECO:0000255" key="1">
    <source>
        <dbReference type="HAMAP-Rule" id="MF_01694"/>
    </source>
</evidence>
<evidence type="ECO:0000255" key="2">
    <source>
        <dbReference type="PROSITE-ProRule" id="PRU01266"/>
    </source>
</evidence>
<name>BIOB_MYCSS</name>
<proteinExistence type="inferred from homology"/>